<proteinExistence type="evidence at protein level"/>
<reference key="1">
    <citation type="journal article" date="2004" name="Nature">
        <title>Genome sequence of the Brown Norway rat yields insights into mammalian evolution.</title>
        <authorList>
            <person name="Gibbs R.A."/>
            <person name="Weinstock G.M."/>
            <person name="Metzker M.L."/>
            <person name="Muzny D.M."/>
            <person name="Sodergren E.J."/>
            <person name="Scherer S."/>
            <person name="Scott G."/>
            <person name="Steffen D."/>
            <person name="Worley K.C."/>
            <person name="Burch P.E."/>
            <person name="Okwuonu G."/>
            <person name="Hines S."/>
            <person name="Lewis L."/>
            <person name="Deramo C."/>
            <person name="Delgado O."/>
            <person name="Dugan-Rocha S."/>
            <person name="Miner G."/>
            <person name="Morgan M."/>
            <person name="Hawes A."/>
            <person name="Gill R."/>
            <person name="Holt R.A."/>
            <person name="Adams M.D."/>
            <person name="Amanatides P.G."/>
            <person name="Baden-Tillson H."/>
            <person name="Barnstead M."/>
            <person name="Chin S."/>
            <person name="Evans C.A."/>
            <person name="Ferriera S."/>
            <person name="Fosler C."/>
            <person name="Glodek A."/>
            <person name="Gu Z."/>
            <person name="Jennings D."/>
            <person name="Kraft C.L."/>
            <person name="Nguyen T."/>
            <person name="Pfannkoch C.M."/>
            <person name="Sitter C."/>
            <person name="Sutton G.G."/>
            <person name="Venter J.C."/>
            <person name="Woodage T."/>
            <person name="Smith D."/>
            <person name="Lee H.-M."/>
            <person name="Gustafson E."/>
            <person name="Cahill P."/>
            <person name="Kana A."/>
            <person name="Doucette-Stamm L."/>
            <person name="Weinstock K."/>
            <person name="Fechtel K."/>
            <person name="Weiss R.B."/>
            <person name="Dunn D.M."/>
            <person name="Green E.D."/>
            <person name="Blakesley R.W."/>
            <person name="Bouffard G.G."/>
            <person name="De Jong P.J."/>
            <person name="Osoegawa K."/>
            <person name="Zhu B."/>
            <person name="Marra M."/>
            <person name="Schein J."/>
            <person name="Bosdet I."/>
            <person name="Fjell C."/>
            <person name="Jones S."/>
            <person name="Krzywinski M."/>
            <person name="Mathewson C."/>
            <person name="Siddiqui A."/>
            <person name="Wye N."/>
            <person name="McPherson J."/>
            <person name="Zhao S."/>
            <person name="Fraser C.M."/>
            <person name="Shetty J."/>
            <person name="Shatsman S."/>
            <person name="Geer K."/>
            <person name="Chen Y."/>
            <person name="Abramzon S."/>
            <person name="Nierman W.C."/>
            <person name="Havlak P.H."/>
            <person name="Chen R."/>
            <person name="Durbin K.J."/>
            <person name="Egan A."/>
            <person name="Ren Y."/>
            <person name="Song X.-Z."/>
            <person name="Li B."/>
            <person name="Liu Y."/>
            <person name="Qin X."/>
            <person name="Cawley S."/>
            <person name="Cooney A.J."/>
            <person name="D'Souza L.M."/>
            <person name="Martin K."/>
            <person name="Wu J.Q."/>
            <person name="Gonzalez-Garay M.L."/>
            <person name="Jackson A.R."/>
            <person name="Kalafus K.J."/>
            <person name="McLeod M.P."/>
            <person name="Milosavljevic A."/>
            <person name="Virk D."/>
            <person name="Volkov A."/>
            <person name="Wheeler D.A."/>
            <person name="Zhang Z."/>
            <person name="Bailey J.A."/>
            <person name="Eichler E.E."/>
            <person name="Tuzun E."/>
            <person name="Birney E."/>
            <person name="Mongin E."/>
            <person name="Ureta-Vidal A."/>
            <person name="Woodwark C."/>
            <person name="Zdobnov E."/>
            <person name="Bork P."/>
            <person name="Suyama M."/>
            <person name="Torrents D."/>
            <person name="Alexandersson M."/>
            <person name="Trask B.J."/>
            <person name="Young J.M."/>
            <person name="Huang H."/>
            <person name="Wang H."/>
            <person name="Xing H."/>
            <person name="Daniels S."/>
            <person name="Gietzen D."/>
            <person name="Schmidt J."/>
            <person name="Stevens K."/>
            <person name="Vitt U."/>
            <person name="Wingrove J."/>
            <person name="Camara F."/>
            <person name="Mar Alba M."/>
            <person name="Abril J.F."/>
            <person name="Guigo R."/>
            <person name="Smit A."/>
            <person name="Dubchak I."/>
            <person name="Rubin E.M."/>
            <person name="Couronne O."/>
            <person name="Poliakov A."/>
            <person name="Huebner N."/>
            <person name="Ganten D."/>
            <person name="Goesele C."/>
            <person name="Hummel O."/>
            <person name="Kreitler T."/>
            <person name="Lee Y.-A."/>
            <person name="Monti J."/>
            <person name="Schulz H."/>
            <person name="Zimdahl H."/>
            <person name="Himmelbauer H."/>
            <person name="Lehrach H."/>
            <person name="Jacob H.J."/>
            <person name="Bromberg S."/>
            <person name="Gullings-Handley J."/>
            <person name="Jensen-Seaman M.I."/>
            <person name="Kwitek A.E."/>
            <person name="Lazar J."/>
            <person name="Pasko D."/>
            <person name="Tonellato P.J."/>
            <person name="Twigger S."/>
            <person name="Ponting C.P."/>
            <person name="Duarte J.M."/>
            <person name="Rice S."/>
            <person name="Goodstadt L."/>
            <person name="Beatson S.A."/>
            <person name="Emes R.D."/>
            <person name="Winter E.E."/>
            <person name="Webber C."/>
            <person name="Brandt P."/>
            <person name="Nyakatura G."/>
            <person name="Adetobi M."/>
            <person name="Chiaromonte F."/>
            <person name="Elnitski L."/>
            <person name="Eswara P."/>
            <person name="Hardison R.C."/>
            <person name="Hou M."/>
            <person name="Kolbe D."/>
            <person name="Makova K."/>
            <person name="Miller W."/>
            <person name="Nekrutenko A."/>
            <person name="Riemer C."/>
            <person name="Schwartz S."/>
            <person name="Taylor J."/>
            <person name="Yang S."/>
            <person name="Zhang Y."/>
            <person name="Lindpaintner K."/>
            <person name="Andrews T.D."/>
            <person name="Caccamo M."/>
            <person name="Clamp M."/>
            <person name="Clarke L."/>
            <person name="Curwen V."/>
            <person name="Durbin R.M."/>
            <person name="Eyras E."/>
            <person name="Searle S.M."/>
            <person name="Cooper G.M."/>
            <person name="Batzoglou S."/>
            <person name="Brudno M."/>
            <person name="Sidow A."/>
            <person name="Stone E.A."/>
            <person name="Payseur B.A."/>
            <person name="Bourque G."/>
            <person name="Lopez-Otin C."/>
            <person name="Puente X.S."/>
            <person name="Chakrabarti K."/>
            <person name="Chatterji S."/>
            <person name="Dewey C."/>
            <person name="Pachter L."/>
            <person name="Bray N."/>
            <person name="Yap V.B."/>
            <person name="Caspi A."/>
            <person name="Tesler G."/>
            <person name="Pevzner P.A."/>
            <person name="Haussler D."/>
            <person name="Roskin K.M."/>
            <person name="Baertsch R."/>
            <person name="Clawson H."/>
            <person name="Furey T.S."/>
            <person name="Hinrichs A.S."/>
            <person name="Karolchik D."/>
            <person name="Kent W.J."/>
            <person name="Rosenbloom K.R."/>
            <person name="Trumbower H."/>
            <person name="Weirauch M."/>
            <person name="Cooper D.N."/>
            <person name="Stenson P.D."/>
            <person name="Ma B."/>
            <person name="Brent M."/>
            <person name="Arumugam M."/>
            <person name="Shteynberg D."/>
            <person name="Copley R.R."/>
            <person name="Taylor M.S."/>
            <person name="Riethman H."/>
            <person name="Mudunuri U."/>
            <person name="Peterson J."/>
            <person name="Guyer M."/>
            <person name="Felsenfeld A."/>
            <person name="Old S."/>
            <person name="Mockrin S."/>
            <person name="Collins F.S."/>
        </authorList>
    </citation>
    <scope>NUCLEOTIDE SEQUENCE [LARGE SCALE GENOMIC DNA]</scope>
    <source>
        <strain>Brown Norway</strain>
    </source>
</reference>
<reference key="2">
    <citation type="journal article" date="2007" name="J. Biol. Chem.">
        <title>Purification, sequencing, and molecular identification of a mammalian PP-InsP5 kinase that is activated when cells are exposed to hyperosmotic stress.</title>
        <authorList>
            <person name="Choi J.H."/>
            <person name="Williams J."/>
            <person name="Cho J."/>
            <person name="Falck J.R."/>
            <person name="Shears S.B."/>
        </authorList>
    </citation>
    <scope>IDENTIFICATION BY MASS SPECTROMETRY</scope>
    <scope>FUNCTION</scope>
    <scope>CATALYTIC ACTIVITY</scope>
</reference>
<reference key="3">
    <citation type="journal article" date="2012" name="Nat. Commun.">
        <title>Quantitative maps of protein phosphorylation sites across 14 different rat organs and tissues.</title>
        <authorList>
            <person name="Lundby A."/>
            <person name="Secher A."/>
            <person name="Lage K."/>
            <person name="Nordsborg N.B."/>
            <person name="Dmytriyev A."/>
            <person name="Lundby C."/>
            <person name="Olsen J.V."/>
        </authorList>
    </citation>
    <scope>PHOSPHORYLATION [LARGE SCALE ANALYSIS] AT SER-1149</scope>
    <scope>IDENTIFICATION BY MASS SPECTROMETRY [LARGE SCALE ANALYSIS]</scope>
</reference>
<sequence length="1434" mass="159619">MWSLTANEDEDESATAHFFLGAGDEGLGTCGIGMRTGESDSELLEDEEDEVPPEPQIIVGICAMTKKSKSKPMTQILERLCRFDYLTVVILGEDVILNEPVENWPPCHCLISFHSKGFPLDKAVAYSKLRNPFLINDLTMQYYIQDRREVYRILQEEGIDLPRYAVLNRDPACPEECNLIEGEDQVEVNGAVFPKPFVEKPVSAEDHNVYIYYPSSAGGGSQRLFRKIGSRSSVYSPESSVRKTGSYIYEEFMPTDGTDVKVYTVGPDYAHAEARKSPALDGKVERDSEGKEVRYPVMLTAMEKLVARKVCVAFKQTVCGFDLLRANGHSFVCDVNGFSFVKNSMKYYDDCAKILGNTIMRELAPQFQIPWSIPTEAEDIPIVPTTSGTMMELRCVIAIIRHGDRTPKQKMKMEVTHPRFFALFEKHGGYKTGKLKLKRPEQLQEVLDITRLLLAELEKEPGAEIEEKTGKLEQLKSVLEMYGHFSGINRKVQLTYYPHGVKASSEGQDLQREPPAPSLLLVLKWGGELTPDGRVQAEELGRAFRCMYPGGQGDYAGFPGCGLLRLHSTFRHDLKIYASDEGRVQMTAAAFAKGLLALEGELTPILVQMVKSANMNGLLDSDSDSLSSCQHRVKARLHHILQQDAPFGPEDYDQLAPTGSTSLLNSMSVIQNPVKVCDQVFALIENLTHQIRERMQDPSSVDLQLYHSETLELMLQRWSKLERDFRQKSGRYDISKIPDIYDCVKYDVQHNGSLGLQGTAELLRLSKALADVVIPQEYGISREEKVEIAVGFCLPLLRKILLDLQRTHEDESVNKLHPLYSRGVLSPGRHVRTRLYFTSESHVHSLLSVFRYGGLLDETKDAQWQRALAYLSAISELNYMTQIVIMLYEDNTRDPLSEERFHVELHFSPGVKGVEEGSAPAGCGFRPASSENEEMKTDPGSIENLCPAKPSDEPDRALQTSPQPVEGTGLPRRSPLIRNRKAGSMEVLSETSSSRPGGYRLFSSSRPPTEMKQSGLGSQCTGLFSTTVLGGSSSAPNLQDYARTHGKKLPPAGLKHRDELLFVPAVKRFSVSFAKHPTNGFEGCSMVPTIYPLETLHNALSLRQVSEFLTKVCQRHTDAHAQASAALFDSMHNHQASDNPFSPPRTLHSPPLQLRHRSEKPPWYSSGPSSTVSSAGPSSPTTVDGNSHFGFSDQSSVNTQMIEEKQGLGLLQETPGDGTPEFHIELAESTQSPQEPPVEISPPGSQDDTEVNQTCQEVPDTIQPCHDILEEIGQPNQEVPDISQLLLKNHDTATNTCQPCQASQLSKKVYEEICQLCQDNPEESNQLCQEVSVELGRMVHRFPVSIGSTTQETLMEIGRPTQEIPEEPCQEFSEKVGMLTQKASAISELSQDILETDNPSQELSEETDLQAQEVSEEIDQEPEVVDELSNEDIS</sequence>
<accession>P0C644</accession>
<evidence type="ECO:0000250" key="1">
    <source>
        <dbReference type="UniProtKB" id="A2ARP1"/>
    </source>
</evidence>
<evidence type="ECO:0000250" key="2">
    <source>
        <dbReference type="UniProtKB" id="O43314"/>
    </source>
</evidence>
<evidence type="ECO:0000250" key="3">
    <source>
        <dbReference type="UniProtKB" id="Q6PFW1"/>
    </source>
</evidence>
<evidence type="ECO:0000256" key="4">
    <source>
        <dbReference type="SAM" id="MobiDB-lite"/>
    </source>
</evidence>
<evidence type="ECO:0000269" key="5">
    <source>
    </source>
</evidence>
<evidence type="ECO:0000305" key="6"/>
<evidence type="ECO:0000312" key="7">
    <source>
        <dbReference type="RGD" id="1311552"/>
    </source>
</evidence>
<evidence type="ECO:0007744" key="8">
    <source>
    </source>
</evidence>
<protein>
    <recommendedName>
        <fullName evidence="6">Inositol hexakisphosphate and diphosphoinositol-pentakisphosphate kinase 1</fullName>
        <ecNumber evidence="5">2.7.4.24</ecNumber>
    </recommendedName>
    <alternativeName>
        <fullName>Diphosphoinositol pentakisphosphate kinase 1</fullName>
    </alternativeName>
    <alternativeName>
        <fullName>Histidine acid phosphatase domain-containing protein 2A</fullName>
    </alternativeName>
    <alternativeName>
        <fullName>InsP6 and PP-IP5 kinase 1</fullName>
    </alternativeName>
    <alternativeName>
        <fullName>VIP1 homolog</fullName>
    </alternativeName>
</protein>
<comment type="function">
    <text evidence="3 5">Bifunctional inositol kinase that acts in concert with the IP6K kinases IP6K1, IP6K2 and IP6K3 to synthesize the diphosphate group-containing inositol pyrophosphates diphosphoinositol pentakisphosphate, PP-InsP5, and bis-diphosphoinositol tetrakisphosphate, (PP)2-InsP4. PP-InsP5 and (PP)2-InsP4, also respectively called InsP7 and InsP8, regulate a variety of cellular processes, including apoptosis, vesicle trafficking, cytoskeletal dynamics, exocytosis, insulin signaling and neutrophil activation. Phosphorylates inositol hexakisphosphate (InsP6) at position 1 to produce PP-InsP5 which is in turn phosphorylated by IP6Ks to produce (PP)2-InsP4. Alternatively, phosphorylates PP-InsP5 at position 1, produced by IP6Ks from InsP6, to produce (PP)2-InsP4. Activated when cells are exposed to hyperosmotic stress.</text>
</comment>
<comment type="catalytic activity">
    <reaction evidence="3">
        <text>1D-myo-inositol hexakisphosphate + ATP = 1-diphospho-1D-myo-inositol 2,3,4,5,6-pentakisphosphate + ADP</text>
        <dbReference type="Rhea" id="RHEA:37459"/>
        <dbReference type="ChEBI" id="CHEBI:30616"/>
        <dbReference type="ChEBI" id="CHEBI:58130"/>
        <dbReference type="ChEBI" id="CHEBI:74946"/>
        <dbReference type="ChEBI" id="CHEBI:456216"/>
        <dbReference type="EC" id="2.7.4.24"/>
    </reaction>
    <physiologicalReaction direction="left-to-right" evidence="3">
        <dbReference type="Rhea" id="RHEA:37460"/>
    </physiologicalReaction>
</comment>
<comment type="catalytic activity">
    <reaction evidence="5">
        <text>5-diphospho-1D-myo-inositol 1,2,3,4,6-pentakisphosphate + ATP + H(+) = 1,5-bis(diphospho)-1D-myo-inositol 2,3,4,6-tetrakisphosphate + ADP</text>
        <dbReference type="Rhea" id="RHEA:10276"/>
        <dbReference type="ChEBI" id="CHEBI:15378"/>
        <dbReference type="ChEBI" id="CHEBI:30616"/>
        <dbReference type="ChEBI" id="CHEBI:58628"/>
        <dbReference type="ChEBI" id="CHEBI:77983"/>
        <dbReference type="ChEBI" id="CHEBI:456216"/>
        <dbReference type="EC" id="2.7.4.24"/>
    </reaction>
    <physiologicalReaction direction="left-to-right" evidence="5">
        <dbReference type="Rhea" id="RHEA:10277"/>
    </physiologicalReaction>
</comment>
<comment type="subcellular location">
    <subcellularLocation>
        <location evidence="3">Cytoplasm</location>
        <location evidence="3">Cytosol</location>
    </subcellularLocation>
    <subcellularLocation>
        <location evidence="3">Cell membrane</location>
    </subcellularLocation>
    <text evidence="3">Relocalizes to the plasma membrane upon activation of the PtdIns 3-kinase pathway.</text>
</comment>
<comment type="domain">
    <text evidence="3">The C-terminal acid phosphatase-like domain binds PtdIns(3,4,5)P3 and InsP6. Despite its similarity with the phosphatase domain of histidine acid phosphatases, it has no phosphatase activity.</text>
</comment>
<comment type="similarity">
    <text evidence="6">Belongs to the histidine acid phosphatase family. VIP1 subfamily.</text>
</comment>
<name>VIP1_RAT</name>
<keyword id="KW-0067">ATP-binding</keyword>
<keyword id="KW-1003">Cell membrane</keyword>
<keyword id="KW-0963">Cytoplasm</keyword>
<keyword id="KW-0418">Kinase</keyword>
<keyword id="KW-0472">Membrane</keyword>
<keyword id="KW-0547">Nucleotide-binding</keyword>
<keyword id="KW-0597">Phosphoprotein</keyword>
<keyword id="KW-1185">Reference proteome</keyword>
<keyword id="KW-0808">Transferase</keyword>
<dbReference type="EC" id="2.7.4.24" evidence="5"/>
<dbReference type="EMBL" id="AC116071">
    <property type="status" value="NOT_ANNOTATED_CDS"/>
    <property type="molecule type" value="Genomic_DNA"/>
</dbReference>
<dbReference type="SMR" id="P0C644"/>
<dbReference type="FunCoup" id="P0C644">
    <property type="interactions" value="770"/>
</dbReference>
<dbReference type="IntAct" id="P0C644">
    <property type="interactions" value="2"/>
</dbReference>
<dbReference type="STRING" id="10116.ENSRNOP00000059430"/>
<dbReference type="iPTMnet" id="P0C644"/>
<dbReference type="PhosphoSitePlus" id="P0C644"/>
<dbReference type="PaxDb" id="10116-ENSRNOP00000059430"/>
<dbReference type="UCSC" id="RGD:1311552">
    <property type="organism name" value="rat"/>
</dbReference>
<dbReference type="AGR" id="RGD:1311552"/>
<dbReference type="RGD" id="1311552">
    <property type="gene designation" value="Ppip5k1"/>
</dbReference>
<dbReference type="eggNOG" id="KOG1057">
    <property type="taxonomic scope" value="Eukaryota"/>
</dbReference>
<dbReference type="InParanoid" id="P0C644"/>
<dbReference type="PhylomeDB" id="P0C644"/>
<dbReference type="BRENDA" id="2.7.4.24">
    <property type="organism ID" value="5301"/>
</dbReference>
<dbReference type="Reactome" id="R-RNO-1855167">
    <property type="pathway name" value="Synthesis of pyrophosphates in the cytosol"/>
</dbReference>
<dbReference type="PRO" id="PR:P0C644"/>
<dbReference type="Proteomes" id="UP000002494">
    <property type="component" value="Unplaced"/>
</dbReference>
<dbReference type="GO" id="GO:0005829">
    <property type="term" value="C:cytosol"/>
    <property type="evidence" value="ECO:0000250"/>
    <property type="project" value="UniProtKB"/>
</dbReference>
<dbReference type="GO" id="GO:0005886">
    <property type="term" value="C:plasma membrane"/>
    <property type="evidence" value="ECO:0007669"/>
    <property type="project" value="UniProtKB-SubCell"/>
</dbReference>
<dbReference type="GO" id="GO:0033857">
    <property type="term" value="F:5-diphosphoinositol pentakisphosphate 1-kinase activity"/>
    <property type="evidence" value="ECO:0000314"/>
    <property type="project" value="UniProtKB"/>
</dbReference>
<dbReference type="GO" id="GO:0005524">
    <property type="term" value="F:ATP binding"/>
    <property type="evidence" value="ECO:0000250"/>
    <property type="project" value="UniProtKB"/>
</dbReference>
<dbReference type="GO" id="GO:0052723">
    <property type="term" value="F:inositol hexakisphosphate 1-kinase activity"/>
    <property type="evidence" value="ECO:0007669"/>
    <property type="project" value="RHEA"/>
</dbReference>
<dbReference type="GO" id="GO:0000832">
    <property type="term" value="F:inositol hexakisphosphate 5-kinase activity"/>
    <property type="evidence" value="ECO:0000250"/>
    <property type="project" value="UniProtKB"/>
</dbReference>
<dbReference type="GO" id="GO:0000828">
    <property type="term" value="F:inositol hexakisphosphate kinase activity"/>
    <property type="evidence" value="ECO:0000314"/>
    <property type="project" value="UniProtKB"/>
</dbReference>
<dbReference type="GO" id="GO:0000827">
    <property type="term" value="F:inositol-1,3,4,5,6-pentakisphosphate kinase activity"/>
    <property type="evidence" value="ECO:0000250"/>
    <property type="project" value="UniProtKB"/>
</dbReference>
<dbReference type="GO" id="GO:0006020">
    <property type="term" value="P:inositol metabolic process"/>
    <property type="evidence" value="ECO:0000250"/>
    <property type="project" value="UniProtKB"/>
</dbReference>
<dbReference type="GO" id="GO:0032958">
    <property type="term" value="P:inositol phosphate biosynthetic process"/>
    <property type="evidence" value="ECO:0000318"/>
    <property type="project" value="GO_Central"/>
</dbReference>
<dbReference type="CDD" id="cd07061">
    <property type="entry name" value="HP_HAP_like"/>
    <property type="match status" value="1"/>
</dbReference>
<dbReference type="FunFam" id="3.30.470.20:FF:000003">
    <property type="entry name" value="Inositol hexakisphosphate and diphosphoinositol-pentakisphosphate kinase"/>
    <property type="match status" value="1"/>
</dbReference>
<dbReference type="FunFam" id="3.40.50.11950:FF:000002">
    <property type="entry name" value="Inositol hexakisphosphate and diphosphoinositol-pentakisphosphate kinase"/>
    <property type="match status" value="1"/>
</dbReference>
<dbReference type="FunFam" id="3.40.50.11950:FF:000003">
    <property type="entry name" value="Inositol hexakisphosphate and diphosphoinositol-pentakisphosphate kinase"/>
    <property type="match status" value="1"/>
</dbReference>
<dbReference type="Gene3D" id="3.40.50.11950">
    <property type="match status" value="1"/>
</dbReference>
<dbReference type="Gene3D" id="3.30.470.20">
    <property type="entry name" value="ATP-grasp fold, B domain"/>
    <property type="match status" value="1"/>
</dbReference>
<dbReference type="Gene3D" id="3.40.50.1240">
    <property type="entry name" value="Phosphoglycerate mutase-like"/>
    <property type="match status" value="1"/>
</dbReference>
<dbReference type="InterPro" id="IPR033379">
    <property type="entry name" value="Acid_Pase_AS"/>
</dbReference>
<dbReference type="InterPro" id="IPR000560">
    <property type="entry name" value="His_Pase_clade-2"/>
</dbReference>
<dbReference type="InterPro" id="IPR037446">
    <property type="entry name" value="His_Pase_VIP1"/>
</dbReference>
<dbReference type="InterPro" id="IPR029033">
    <property type="entry name" value="His_PPase_superfam"/>
</dbReference>
<dbReference type="InterPro" id="IPR040557">
    <property type="entry name" value="VIP1_N"/>
</dbReference>
<dbReference type="PANTHER" id="PTHR12750">
    <property type="entry name" value="DIPHOSPHOINOSITOL PENTAKISPHOSPHATE KINASE"/>
    <property type="match status" value="1"/>
</dbReference>
<dbReference type="PANTHER" id="PTHR12750:SF11">
    <property type="entry name" value="INOSITOL HEXAKISPHOSPHATE AND DIPHOSPHOINOSITOL-PENTAKISPHOSPHATE KINASE 1"/>
    <property type="match status" value="1"/>
</dbReference>
<dbReference type="Pfam" id="PF00328">
    <property type="entry name" value="His_Phos_2"/>
    <property type="match status" value="1"/>
</dbReference>
<dbReference type="Pfam" id="PF18086">
    <property type="entry name" value="PPIP5K2_N"/>
    <property type="match status" value="1"/>
</dbReference>
<dbReference type="SUPFAM" id="SSF53254">
    <property type="entry name" value="Phosphoglycerate mutase-like"/>
    <property type="match status" value="1"/>
</dbReference>
<dbReference type="PROSITE" id="PS00616">
    <property type="entry name" value="HIS_ACID_PHOSPHAT_1"/>
    <property type="match status" value="1"/>
</dbReference>
<feature type="chain" id="PRO_0000315691" description="Inositol hexakisphosphate and diphosphoinositol-pentakisphosphate kinase 1">
    <location>
        <begin position="1"/>
        <end position="1434"/>
    </location>
</feature>
<feature type="region of interest" description="Polyphosphoinositide-binding domain" evidence="3">
    <location>
        <begin position="384"/>
        <end position="455"/>
    </location>
</feature>
<feature type="region of interest" description="Disordered" evidence="4">
    <location>
        <begin position="916"/>
        <end position="1017"/>
    </location>
</feature>
<feature type="region of interest" description="Disordered" evidence="4">
    <location>
        <begin position="1133"/>
        <end position="1193"/>
    </location>
</feature>
<feature type="region of interest" description="Disordered" evidence="4">
    <location>
        <begin position="1228"/>
        <end position="1251"/>
    </location>
</feature>
<feature type="region of interest" description="Disordered" evidence="4">
    <location>
        <begin position="1396"/>
        <end position="1434"/>
    </location>
</feature>
<feature type="compositionally biased region" description="Polar residues" evidence="4">
    <location>
        <begin position="1002"/>
        <end position="1017"/>
    </location>
</feature>
<feature type="compositionally biased region" description="Low complexity" evidence="4">
    <location>
        <begin position="1165"/>
        <end position="1183"/>
    </location>
</feature>
<feature type="compositionally biased region" description="Acidic residues" evidence="4">
    <location>
        <begin position="1403"/>
        <end position="1434"/>
    </location>
</feature>
<feature type="binding site" evidence="2">
    <location>
        <begin position="66"/>
        <end position="67"/>
    </location>
    <ligand>
        <name>substrate</name>
    </ligand>
</feature>
<feature type="binding site" evidence="2">
    <location>
        <position position="147"/>
    </location>
    <ligand>
        <name>ATP</name>
        <dbReference type="ChEBI" id="CHEBI:30616"/>
    </ligand>
</feature>
<feature type="binding site" evidence="2">
    <location>
        <position position="200"/>
    </location>
    <ligand>
        <name>ATP</name>
        <dbReference type="ChEBI" id="CHEBI:30616"/>
    </ligand>
</feature>
<feature type="binding site" evidence="2">
    <location>
        <position position="207"/>
    </location>
    <ligand>
        <name>ATP</name>
        <dbReference type="ChEBI" id="CHEBI:30616"/>
    </ligand>
</feature>
<feature type="binding site" evidence="2">
    <location>
        <begin position="226"/>
        <end position="227"/>
    </location>
    <ligand>
        <name>substrate</name>
    </ligand>
</feature>
<feature type="binding site" evidence="2">
    <location>
        <position position="226"/>
    </location>
    <ligand>
        <name>ATP</name>
        <dbReference type="ChEBI" id="CHEBI:30616"/>
    </ligand>
</feature>
<feature type="binding site" evidence="2">
    <location>
        <begin position="250"/>
        <end position="253"/>
    </location>
    <ligand>
        <name>ATP</name>
        <dbReference type="ChEBI" id="CHEBI:30616"/>
    </ligand>
</feature>
<feature type="binding site" evidence="2">
    <location>
        <begin position="259"/>
        <end position="261"/>
    </location>
    <ligand>
        <name>ATP</name>
        <dbReference type="ChEBI" id="CHEBI:30616"/>
    </ligand>
</feature>
<feature type="binding site" evidence="2">
    <location>
        <position position="261"/>
    </location>
    <ligand>
        <name>substrate</name>
    </ligand>
</feature>
<feature type="binding site" evidence="2">
    <location>
        <position position="275"/>
    </location>
    <ligand>
        <name>substrate</name>
    </ligand>
</feature>
<feature type="binding site" evidence="2">
    <location>
        <position position="277"/>
    </location>
    <ligand>
        <name>ATP</name>
        <dbReference type="ChEBI" id="CHEBI:30616"/>
    </ligand>
</feature>
<feature type="binding site" evidence="2">
    <location>
        <position position="322"/>
    </location>
    <ligand>
        <name>ATP</name>
        <dbReference type="ChEBI" id="CHEBI:30616"/>
    </ligand>
</feature>
<feature type="binding site" evidence="2">
    <location>
        <begin position="334"/>
        <end position="336"/>
    </location>
    <ligand>
        <name>ATP</name>
        <dbReference type="ChEBI" id="CHEBI:30616"/>
    </ligand>
</feature>
<feature type="binding site" evidence="2">
    <location>
        <begin position="339"/>
        <end position="342"/>
    </location>
    <ligand>
        <name>substrate</name>
    </ligand>
</feature>
<feature type="modified residue" description="Phosphoserine" evidence="3">
    <location>
        <position position="941"/>
    </location>
</feature>
<feature type="modified residue" description="Phosphoserine" evidence="3">
    <location>
        <position position="984"/>
    </location>
</feature>
<feature type="modified residue" description="Phosphoserine" evidence="3">
    <location>
        <position position="1034"/>
    </location>
</feature>
<feature type="modified residue" description="Phosphoserine" evidence="3">
    <location>
        <position position="1070"/>
    </location>
</feature>
<feature type="modified residue" description="Phosphoserine" evidence="1">
    <location>
        <position position="1142"/>
    </location>
</feature>
<feature type="modified residue" description="Phosphoserine" evidence="8">
    <location>
        <position position="1149"/>
    </location>
</feature>
<organism>
    <name type="scientific">Rattus norvegicus</name>
    <name type="common">Rat</name>
    <dbReference type="NCBI Taxonomy" id="10116"/>
    <lineage>
        <taxon>Eukaryota</taxon>
        <taxon>Metazoa</taxon>
        <taxon>Chordata</taxon>
        <taxon>Craniata</taxon>
        <taxon>Vertebrata</taxon>
        <taxon>Euteleostomi</taxon>
        <taxon>Mammalia</taxon>
        <taxon>Eutheria</taxon>
        <taxon>Euarchontoglires</taxon>
        <taxon>Glires</taxon>
        <taxon>Rodentia</taxon>
        <taxon>Myomorpha</taxon>
        <taxon>Muroidea</taxon>
        <taxon>Muridae</taxon>
        <taxon>Murinae</taxon>
        <taxon>Rattus</taxon>
    </lineage>
</organism>
<gene>
    <name evidence="7" type="primary">Ppip5k1</name>
    <name type="synonym">Hisppd2a</name>
    <name type="synonym">Vip1</name>
</gene>